<keyword id="KW-0687">Ribonucleoprotein</keyword>
<keyword id="KW-0689">Ribosomal protein</keyword>
<evidence type="ECO:0000255" key="1">
    <source>
        <dbReference type="HAMAP-Rule" id="MF_00373"/>
    </source>
</evidence>
<evidence type="ECO:0000256" key="2">
    <source>
        <dbReference type="SAM" id="MobiDB-lite"/>
    </source>
</evidence>
<evidence type="ECO:0000305" key="3"/>
<gene>
    <name evidence="1" type="primary">rpmB</name>
    <name type="ordered locus">BCA_3958</name>
</gene>
<feature type="chain" id="PRO_1000195902" description="Large ribosomal subunit protein bL28">
    <location>
        <begin position="1"/>
        <end position="62"/>
    </location>
</feature>
<feature type="region of interest" description="Disordered" evidence="2">
    <location>
        <begin position="1"/>
        <end position="28"/>
    </location>
</feature>
<dbReference type="EMBL" id="CP001407">
    <property type="protein sequence ID" value="ACO30247.1"/>
    <property type="molecule type" value="Genomic_DNA"/>
</dbReference>
<dbReference type="RefSeq" id="WP_000124776.1">
    <property type="nucleotide sequence ID" value="NZ_CP009318.1"/>
</dbReference>
<dbReference type="SMR" id="C1EP82"/>
<dbReference type="GeneID" id="93007254"/>
<dbReference type="KEGG" id="bcx:BCA_3958"/>
<dbReference type="PATRIC" id="fig|572264.18.peg.3914"/>
<dbReference type="Proteomes" id="UP000002210">
    <property type="component" value="Chromosome"/>
</dbReference>
<dbReference type="GO" id="GO:1990904">
    <property type="term" value="C:ribonucleoprotein complex"/>
    <property type="evidence" value="ECO:0007669"/>
    <property type="project" value="UniProtKB-KW"/>
</dbReference>
<dbReference type="GO" id="GO:0005840">
    <property type="term" value="C:ribosome"/>
    <property type="evidence" value="ECO:0007669"/>
    <property type="project" value="UniProtKB-KW"/>
</dbReference>
<dbReference type="GO" id="GO:0003735">
    <property type="term" value="F:structural constituent of ribosome"/>
    <property type="evidence" value="ECO:0007669"/>
    <property type="project" value="InterPro"/>
</dbReference>
<dbReference type="GO" id="GO:0006412">
    <property type="term" value="P:translation"/>
    <property type="evidence" value="ECO:0007669"/>
    <property type="project" value="UniProtKB-UniRule"/>
</dbReference>
<dbReference type="Gene3D" id="2.30.170.40">
    <property type="entry name" value="Ribosomal protein L28/L24"/>
    <property type="match status" value="1"/>
</dbReference>
<dbReference type="HAMAP" id="MF_00373">
    <property type="entry name" value="Ribosomal_bL28"/>
    <property type="match status" value="1"/>
</dbReference>
<dbReference type="InterPro" id="IPR050096">
    <property type="entry name" value="Bacterial_rp_bL28"/>
</dbReference>
<dbReference type="InterPro" id="IPR026569">
    <property type="entry name" value="Ribosomal_bL28"/>
</dbReference>
<dbReference type="InterPro" id="IPR034704">
    <property type="entry name" value="Ribosomal_bL28/bL31-like_sf"/>
</dbReference>
<dbReference type="InterPro" id="IPR001383">
    <property type="entry name" value="Ribosomal_bL28_bact-type"/>
</dbReference>
<dbReference type="InterPro" id="IPR037147">
    <property type="entry name" value="Ribosomal_bL28_sf"/>
</dbReference>
<dbReference type="NCBIfam" id="TIGR00009">
    <property type="entry name" value="L28"/>
    <property type="match status" value="1"/>
</dbReference>
<dbReference type="PANTHER" id="PTHR39080">
    <property type="entry name" value="50S RIBOSOMAL PROTEIN L28"/>
    <property type="match status" value="1"/>
</dbReference>
<dbReference type="PANTHER" id="PTHR39080:SF1">
    <property type="entry name" value="LARGE RIBOSOMAL SUBUNIT PROTEIN BL28A"/>
    <property type="match status" value="1"/>
</dbReference>
<dbReference type="Pfam" id="PF00830">
    <property type="entry name" value="Ribosomal_L28"/>
    <property type="match status" value="1"/>
</dbReference>
<dbReference type="SUPFAM" id="SSF143800">
    <property type="entry name" value="L28p-like"/>
    <property type="match status" value="1"/>
</dbReference>
<accession>C1EP82</accession>
<name>RL28_BACC3</name>
<proteinExistence type="inferred from homology"/>
<organism>
    <name type="scientific">Bacillus cereus (strain 03BB102)</name>
    <dbReference type="NCBI Taxonomy" id="572264"/>
    <lineage>
        <taxon>Bacteria</taxon>
        <taxon>Bacillati</taxon>
        <taxon>Bacillota</taxon>
        <taxon>Bacilli</taxon>
        <taxon>Bacillales</taxon>
        <taxon>Bacillaceae</taxon>
        <taxon>Bacillus</taxon>
        <taxon>Bacillus cereus group</taxon>
    </lineage>
</organism>
<sequence>MARVCAITGRKARSGNSRSHAMNATKRKWGANLQKVRVRIDGKVQRVYVSARALKSGKIERV</sequence>
<reference key="1">
    <citation type="submission" date="2009-02" db="EMBL/GenBank/DDBJ databases">
        <title>Genome sequence of Bacillus cereus 03BB102.</title>
        <authorList>
            <person name="Dodson R.J."/>
            <person name="Jackson P."/>
            <person name="Munk A.C."/>
            <person name="Brettin T."/>
            <person name="Bruce D."/>
            <person name="Detter C."/>
            <person name="Tapia R."/>
            <person name="Han C."/>
            <person name="Sutton G."/>
            <person name="Sims D."/>
        </authorList>
    </citation>
    <scope>NUCLEOTIDE SEQUENCE [LARGE SCALE GENOMIC DNA]</scope>
    <source>
        <strain>03BB102</strain>
    </source>
</reference>
<comment type="similarity">
    <text evidence="1">Belongs to the bacterial ribosomal protein bL28 family.</text>
</comment>
<protein>
    <recommendedName>
        <fullName evidence="1">Large ribosomal subunit protein bL28</fullName>
    </recommendedName>
    <alternativeName>
        <fullName evidence="3">50S ribosomal protein L28</fullName>
    </alternativeName>
</protein>